<feature type="chain" id="PRO_1000126700" description="Large ribosomal subunit protein bL31">
    <location>
        <begin position="1"/>
        <end position="71"/>
    </location>
</feature>
<feature type="binding site" evidence="1">
    <location>
        <position position="16"/>
    </location>
    <ligand>
        <name>Zn(2+)</name>
        <dbReference type="ChEBI" id="CHEBI:29105"/>
    </ligand>
</feature>
<feature type="binding site" evidence="1">
    <location>
        <position position="18"/>
    </location>
    <ligand>
        <name>Zn(2+)</name>
        <dbReference type="ChEBI" id="CHEBI:29105"/>
    </ligand>
</feature>
<feature type="binding site" evidence="1">
    <location>
        <position position="37"/>
    </location>
    <ligand>
        <name>Zn(2+)</name>
        <dbReference type="ChEBI" id="CHEBI:29105"/>
    </ligand>
</feature>
<feature type="binding site" evidence="1">
    <location>
        <position position="40"/>
    </location>
    <ligand>
        <name>Zn(2+)</name>
        <dbReference type="ChEBI" id="CHEBI:29105"/>
    </ligand>
</feature>
<sequence>MKADIHPNYEVVAVTCSCGNKFETRSTLGSVLAIDVCNLCHPFYTGKQKVLDTGGRVQKFADRFGMFGTKK</sequence>
<evidence type="ECO:0000255" key="1">
    <source>
        <dbReference type="HAMAP-Rule" id="MF_00501"/>
    </source>
</evidence>
<evidence type="ECO:0000305" key="2"/>
<dbReference type="EMBL" id="CT573326">
    <property type="protein sequence ID" value="CAK13286.1"/>
    <property type="molecule type" value="Genomic_DNA"/>
</dbReference>
<dbReference type="RefSeq" id="WP_011531746.1">
    <property type="nucleotide sequence ID" value="NC_008027.1"/>
</dbReference>
<dbReference type="SMR" id="Q1IGB6"/>
<dbReference type="STRING" id="384676.PSEEN0325"/>
<dbReference type="GeneID" id="58770640"/>
<dbReference type="KEGG" id="pen:PSEEN0325"/>
<dbReference type="eggNOG" id="COG0254">
    <property type="taxonomic scope" value="Bacteria"/>
</dbReference>
<dbReference type="HOGENOM" id="CLU_114306_4_0_6"/>
<dbReference type="OrthoDB" id="9803251at2"/>
<dbReference type="Proteomes" id="UP000000658">
    <property type="component" value="Chromosome"/>
</dbReference>
<dbReference type="GO" id="GO:1990904">
    <property type="term" value="C:ribonucleoprotein complex"/>
    <property type="evidence" value="ECO:0007669"/>
    <property type="project" value="UniProtKB-KW"/>
</dbReference>
<dbReference type="GO" id="GO:0005840">
    <property type="term" value="C:ribosome"/>
    <property type="evidence" value="ECO:0007669"/>
    <property type="project" value="UniProtKB-KW"/>
</dbReference>
<dbReference type="GO" id="GO:0046872">
    <property type="term" value="F:metal ion binding"/>
    <property type="evidence" value="ECO:0007669"/>
    <property type="project" value="UniProtKB-KW"/>
</dbReference>
<dbReference type="GO" id="GO:0019843">
    <property type="term" value="F:rRNA binding"/>
    <property type="evidence" value="ECO:0007669"/>
    <property type="project" value="UniProtKB-KW"/>
</dbReference>
<dbReference type="GO" id="GO:0003735">
    <property type="term" value="F:structural constituent of ribosome"/>
    <property type="evidence" value="ECO:0007669"/>
    <property type="project" value="InterPro"/>
</dbReference>
<dbReference type="GO" id="GO:0006412">
    <property type="term" value="P:translation"/>
    <property type="evidence" value="ECO:0007669"/>
    <property type="project" value="UniProtKB-UniRule"/>
</dbReference>
<dbReference type="Gene3D" id="4.10.830.30">
    <property type="entry name" value="Ribosomal protein L31"/>
    <property type="match status" value="1"/>
</dbReference>
<dbReference type="HAMAP" id="MF_00501">
    <property type="entry name" value="Ribosomal_bL31_1"/>
    <property type="match status" value="1"/>
</dbReference>
<dbReference type="InterPro" id="IPR034704">
    <property type="entry name" value="Ribosomal_bL28/bL31-like_sf"/>
</dbReference>
<dbReference type="InterPro" id="IPR002150">
    <property type="entry name" value="Ribosomal_bL31"/>
</dbReference>
<dbReference type="InterPro" id="IPR027491">
    <property type="entry name" value="Ribosomal_bL31_A"/>
</dbReference>
<dbReference type="InterPro" id="IPR042105">
    <property type="entry name" value="Ribosomal_bL31_sf"/>
</dbReference>
<dbReference type="NCBIfam" id="TIGR00105">
    <property type="entry name" value="L31"/>
    <property type="match status" value="1"/>
</dbReference>
<dbReference type="NCBIfam" id="NF000612">
    <property type="entry name" value="PRK00019.1"/>
    <property type="match status" value="1"/>
</dbReference>
<dbReference type="NCBIfam" id="NF001809">
    <property type="entry name" value="PRK00528.1"/>
    <property type="match status" value="1"/>
</dbReference>
<dbReference type="PANTHER" id="PTHR33280">
    <property type="entry name" value="50S RIBOSOMAL PROTEIN L31, CHLOROPLASTIC"/>
    <property type="match status" value="1"/>
</dbReference>
<dbReference type="PANTHER" id="PTHR33280:SF6">
    <property type="entry name" value="LARGE RIBOSOMAL SUBUNIT PROTEIN BL31A"/>
    <property type="match status" value="1"/>
</dbReference>
<dbReference type="Pfam" id="PF01197">
    <property type="entry name" value="Ribosomal_L31"/>
    <property type="match status" value="1"/>
</dbReference>
<dbReference type="PRINTS" id="PR01249">
    <property type="entry name" value="RIBOSOMALL31"/>
</dbReference>
<dbReference type="SUPFAM" id="SSF143800">
    <property type="entry name" value="L28p-like"/>
    <property type="match status" value="1"/>
</dbReference>
<dbReference type="PROSITE" id="PS01143">
    <property type="entry name" value="RIBOSOMAL_L31"/>
    <property type="match status" value="1"/>
</dbReference>
<organism>
    <name type="scientific">Pseudomonas entomophila (strain L48)</name>
    <dbReference type="NCBI Taxonomy" id="384676"/>
    <lineage>
        <taxon>Bacteria</taxon>
        <taxon>Pseudomonadati</taxon>
        <taxon>Pseudomonadota</taxon>
        <taxon>Gammaproteobacteria</taxon>
        <taxon>Pseudomonadales</taxon>
        <taxon>Pseudomonadaceae</taxon>
        <taxon>Pseudomonas</taxon>
    </lineage>
</organism>
<proteinExistence type="inferred from homology"/>
<gene>
    <name evidence="1" type="primary">rpmE</name>
    <name type="ordered locus">PSEEN0325</name>
</gene>
<comment type="function">
    <text evidence="1">Binds the 23S rRNA.</text>
</comment>
<comment type="cofactor">
    <cofactor evidence="1">
        <name>Zn(2+)</name>
        <dbReference type="ChEBI" id="CHEBI:29105"/>
    </cofactor>
    <text evidence="1">Binds 1 zinc ion per subunit.</text>
</comment>
<comment type="subunit">
    <text evidence="1">Part of the 50S ribosomal subunit.</text>
</comment>
<comment type="similarity">
    <text evidence="1">Belongs to the bacterial ribosomal protein bL31 family. Type A subfamily.</text>
</comment>
<keyword id="KW-0479">Metal-binding</keyword>
<keyword id="KW-0687">Ribonucleoprotein</keyword>
<keyword id="KW-0689">Ribosomal protein</keyword>
<keyword id="KW-0694">RNA-binding</keyword>
<keyword id="KW-0699">rRNA-binding</keyword>
<keyword id="KW-0862">Zinc</keyword>
<reference key="1">
    <citation type="journal article" date="2006" name="Nat. Biotechnol.">
        <title>Complete genome sequence of the entomopathogenic and metabolically versatile soil bacterium Pseudomonas entomophila.</title>
        <authorList>
            <person name="Vodovar N."/>
            <person name="Vallenet D."/>
            <person name="Cruveiller S."/>
            <person name="Rouy Z."/>
            <person name="Barbe V."/>
            <person name="Acosta C."/>
            <person name="Cattolico L."/>
            <person name="Jubin C."/>
            <person name="Lajus A."/>
            <person name="Segurens B."/>
            <person name="Vacherie B."/>
            <person name="Wincker P."/>
            <person name="Weissenbach J."/>
            <person name="Lemaitre B."/>
            <person name="Medigue C."/>
            <person name="Boccard F."/>
        </authorList>
    </citation>
    <scope>NUCLEOTIDE SEQUENCE [LARGE SCALE GENOMIC DNA]</scope>
    <source>
        <strain>L48</strain>
    </source>
</reference>
<protein>
    <recommendedName>
        <fullName evidence="1">Large ribosomal subunit protein bL31</fullName>
    </recommendedName>
    <alternativeName>
        <fullName evidence="2">50S ribosomal protein L31</fullName>
    </alternativeName>
</protein>
<name>RL31_PSEE4</name>
<accession>Q1IGB6</accession>